<evidence type="ECO:0000250" key="1"/>
<evidence type="ECO:0000255" key="2">
    <source>
        <dbReference type="PROSITE-ProRule" id="PRU00176"/>
    </source>
</evidence>
<evidence type="ECO:0000305" key="3"/>
<keyword id="KW-0963">Cytoplasm</keyword>
<keyword id="KW-0217">Developmental protein</keyword>
<keyword id="KW-0221">Differentiation</keyword>
<keyword id="KW-0507">mRNA processing</keyword>
<keyword id="KW-0508">mRNA splicing</keyword>
<keyword id="KW-0539">Nucleus</keyword>
<keyword id="KW-1185">Reference proteome</keyword>
<keyword id="KW-0694">RNA-binding</keyword>
<sequence length="219" mass="24074">MHTVQKDTTFTKIFVGGLPYHTTDASLRKYFEVFGDIDEAVVITDRQTGKSRGYGFVTMSDRAAAERACKDPNPIIDGRKANVNLAYLGAKPRNLQSAFTIGVQQLHPAFIQRPFGLTPQYIYPPAIVQPSVVIPTPIPSLQSPYIDYNAATQAFTHYTTAAYEQYPYAASPATGYMGYGYTSAVQQPLSATTTTATTGAPPTAYIQYQPQQLQPDRMQ</sequence>
<comment type="function">
    <text evidence="1">RNA-binding protein that specifically bind the 3'-UTR of VegT transcripts, leading to maintain their stability and stimulate their translation, thereby playing a role in germ layer formation. VegT is a localized maternal determinant essentially required for endoderm formation. Also has some proneural function in the open neural plate and in the context of retinogenesis. May also act as a mRNA splicing factor. May play a role in myogenic differentiation (By similarity).</text>
</comment>
<comment type="subcellular location">
    <subcellularLocation>
        <location evidence="1">Cytoplasm</location>
        <location evidence="1">Cytosol</location>
    </subcellularLocation>
    <subcellularLocation>
        <location evidence="1">Nucleus</location>
    </subcellularLocation>
</comment>
<comment type="similarity">
    <text evidence="3">Belongs to the RBM38 family.</text>
</comment>
<proteinExistence type="evidence at transcript level"/>
<name>RBM38_XENTR</name>
<feature type="chain" id="PRO_0000355185" description="RNA-binding protein 38">
    <location>
        <begin position="1"/>
        <end position="219"/>
    </location>
</feature>
<feature type="domain" description="RRM" evidence="2">
    <location>
        <begin position="11"/>
        <end position="88"/>
    </location>
</feature>
<gene>
    <name type="primary">rbm38</name>
    <name type="ORF">TTpA006f23.1</name>
</gene>
<reference key="1">
    <citation type="submission" date="2006-10" db="EMBL/GenBank/DDBJ databases">
        <authorList>
            <consortium name="Sanger Xenopus tropicalis EST/cDNA project"/>
        </authorList>
    </citation>
    <scope>NUCLEOTIDE SEQUENCE [LARGE SCALE MRNA]</scope>
    <source>
        <tissue>Tadpole</tissue>
    </source>
</reference>
<reference key="2">
    <citation type="submission" date="2004-06" db="EMBL/GenBank/DDBJ databases">
        <authorList>
            <consortium name="NIH - Xenopus Gene Collection (XGC) project"/>
        </authorList>
    </citation>
    <scope>NUCLEOTIDE SEQUENCE [LARGE SCALE MRNA]</scope>
</reference>
<organism>
    <name type="scientific">Xenopus tropicalis</name>
    <name type="common">Western clawed frog</name>
    <name type="synonym">Silurana tropicalis</name>
    <dbReference type="NCBI Taxonomy" id="8364"/>
    <lineage>
        <taxon>Eukaryota</taxon>
        <taxon>Metazoa</taxon>
        <taxon>Chordata</taxon>
        <taxon>Craniata</taxon>
        <taxon>Vertebrata</taxon>
        <taxon>Euteleostomi</taxon>
        <taxon>Amphibia</taxon>
        <taxon>Batrachia</taxon>
        <taxon>Anura</taxon>
        <taxon>Pipoidea</taxon>
        <taxon>Pipidae</taxon>
        <taxon>Xenopodinae</taxon>
        <taxon>Xenopus</taxon>
        <taxon>Silurana</taxon>
    </lineage>
</organism>
<dbReference type="EMBL" id="CR848225">
    <property type="protein sequence ID" value="CAJ82907.1"/>
    <property type="molecule type" value="mRNA"/>
</dbReference>
<dbReference type="EMBL" id="BC075431">
    <property type="protein sequence ID" value="AAH75431.1"/>
    <property type="molecule type" value="mRNA"/>
</dbReference>
<dbReference type="RefSeq" id="NP_001006916.1">
    <property type="nucleotide sequence ID" value="NM_001006915.1"/>
</dbReference>
<dbReference type="SMR" id="Q6DIV4"/>
<dbReference type="FunCoup" id="Q6DIV4">
    <property type="interactions" value="622"/>
</dbReference>
<dbReference type="STRING" id="8364.ENSXETP00000019427"/>
<dbReference type="PaxDb" id="8364-ENSXETP00000024600"/>
<dbReference type="DNASU" id="448763"/>
<dbReference type="GeneID" id="448763"/>
<dbReference type="KEGG" id="xtr:448763"/>
<dbReference type="AGR" id="Xenbase:XB-GENE-489545"/>
<dbReference type="CTD" id="55544"/>
<dbReference type="Xenbase" id="XB-GENE-489545">
    <property type="gene designation" value="rbm38"/>
</dbReference>
<dbReference type="eggNOG" id="KOG0149">
    <property type="taxonomic scope" value="Eukaryota"/>
</dbReference>
<dbReference type="HOGENOM" id="CLU_065652_0_1_1"/>
<dbReference type="InParanoid" id="Q6DIV4"/>
<dbReference type="OMA" id="FLHYTPQ"/>
<dbReference type="OrthoDB" id="4207594at2759"/>
<dbReference type="PhylomeDB" id="Q6DIV4"/>
<dbReference type="Proteomes" id="UP000008143">
    <property type="component" value="Chromosome 10"/>
</dbReference>
<dbReference type="Bgee" id="ENSXETG00000011268">
    <property type="expression patterns" value="Expressed in 4-cell stage embryo and 13 other cell types or tissues"/>
</dbReference>
<dbReference type="GO" id="GO:0005829">
    <property type="term" value="C:cytosol"/>
    <property type="evidence" value="ECO:0007669"/>
    <property type="project" value="UniProtKB-SubCell"/>
</dbReference>
<dbReference type="GO" id="GO:0005634">
    <property type="term" value="C:nucleus"/>
    <property type="evidence" value="ECO:0007669"/>
    <property type="project" value="UniProtKB-SubCell"/>
</dbReference>
<dbReference type="GO" id="GO:0003723">
    <property type="term" value="F:RNA binding"/>
    <property type="evidence" value="ECO:0007669"/>
    <property type="project" value="UniProtKB-KW"/>
</dbReference>
<dbReference type="GO" id="GO:0030154">
    <property type="term" value="P:cell differentiation"/>
    <property type="evidence" value="ECO:0007669"/>
    <property type="project" value="UniProtKB-KW"/>
</dbReference>
<dbReference type="GO" id="GO:0006397">
    <property type="term" value="P:mRNA processing"/>
    <property type="evidence" value="ECO:0007669"/>
    <property type="project" value="UniProtKB-KW"/>
</dbReference>
<dbReference type="GO" id="GO:0008380">
    <property type="term" value="P:RNA splicing"/>
    <property type="evidence" value="ECO:0007669"/>
    <property type="project" value="UniProtKB-KW"/>
</dbReference>
<dbReference type="CDD" id="cd12384">
    <property type="entry name" value="RRM_RBM24_RBM38_like"/>
    <property type="match status" value="1"/>
</dbReference>
<dbReference type="FunFam" id="3.30.70.330:FF:000077">
    <property type="entry name" value="RNA-binding motif protein 24"/>
    <property type="match status" value="1"/>
</dbReference>
<dbReference type="Gene3D" id="3.30.70.330">
    <property type="match status" value="1"/>
</dbReference>
<dbReference type="InterPro" id="IPR012677">
    <property type="entry name" value="Nucleotide-bd_a/b_plait_sf"/>
</dbReference>
<dbReference type="InterPro" id="IPR035979">
    <property type="entry name" value="RBD_domain_sf"/>
</dbReference>
<dbReference type="InterPro" id="IPR050886">
    <property type="entry name" value="RNA-binding_reg"/>
</dbReference>
<dbReference type="InterPro" id="IPR000504">
    <property type="entry name" value="RRM_dom"/>
</dbReference>
<dbReference type="PANTHER" id="PTHR48024">
    <property type="entry name" value="GEO13361P1-RELATED"/>
    <property type="match status" value="1"/>
</dbReference>
<dbReference type="PANTHER" id="PTHR48024:SF28">
    <property type="entry name" value="RNA-BINDING PROTEIN 38"/>
    <property type="match status" value="1"/>
</dbReference>
<dbReference type="Pfam" id="PF00076">
    <property type="entry name" value="RRM_1"/>
    <property type="match status" value="1"/>
</dbReference>
<dbReference type="SMART" id="SM00360">
    <property type="entry name" value="RRM"/>
    <property type="match status" value="1"/>
</dbReference>
<dbReference type="SUPFAM" id="SSF54928">
    <property type="entry name" value="RNA-binding domain, RBD"/>
    <property type="match status" value="1"/>
</dbReference>
<dbReference type="PROSITE" id="PS50102">
    <property type="entry name" value="RRM"/>
    <property type="match status" value="1"/>
</dbReference>
<protein>
    <recommendedName>
        <fullName>RNA-binding protein 38</fullName>
    </recommendedName>
    <alternativeName>
        <fullName>RNA-binding motif protein 38</fullName>
    </alternativeName>
</protein>
<accession>Q6DIV4</accession>